<feature type="chain" id="PRO_1000072158" description="Chromosomal replication initiator protein DnaA">
    <location>
        <begin position="1"/>
        <end position="453"/>
    </location>
</feature>
<feature type="region of interest" description="Domain I, interacts with DnaA modulators" evidence="1">
    <location>
        <begin position="1"/>
        <end position="71"/>
    </location>
</feature>
<feature type="region of interest" description="Domain II" evidence="1">
    <location>
        <begin position="71"/>
        <end position="114"/>
    </location>
</feature>
<feature type="region of interest" description="Domain III, AAA+ region" evidence="1">
    <location>
        <begin position="115"/>
        <end position="331"/>
    </location>
</feature>
<feature type="region of interest" description="Domain IV, binds dsDNA" evidence="1">
    <location>
        <begin position="332"/>
        <end position="453"/>
    </location>
</feature>
<feature type="binding site" evidence="1">
    <location>
        <position position="159"/>
    </location>
    <ligand>
        <name>ATP</name>
        <dbReference type="ChEBI" id="CHEBI:30616"/>
    </ligand>
</feature>
<feature type="binding site" evidence="1">
    <location>
        <position position="161"/>
    </location>
    <ligand>
        <name>ATP</name>
        <dbReference type="ChEBI" id="CHEBI:30616"/>
    </ligand>
</feature>
<feature type="binding site" evidence="1">
    <location>
        <position position="162"/>
    </location>
    <ligand>
        <name>ATP</name>
        <dbReference type="ChEBI" id="CHEBI:30616"/>
    </ligand>
</feature>
<feature type="binding site" evidence="1">
    <location>
        <position position="163"/>
    </location>
    <ligand>
        <name>ATP</name>
        <dbReference type="ChEBI" id="CHEBI:30616"/>
    </ligand>
</feature>
<name>DNAA_STAAE</name>
<organism>
    <name type="scientific">Staphylococcus aureus (strain Newman)</name>
    <dbReference type="NCBI Taxonomy" id="426430"/>
    <lineage>
        <taxon>Bacteria</taxon>
        <taxon>Bacillati</taxon>
        <taxon>Bacillota</taxon>
        <taxon>Bacilli</taxon>
        <taxon>Bacillales</taxon>
        <taxon>Staphylococcaceae</taxon>
        <taxon>Staphylococcus</taxon>
    </lineage>
</organism>
<protein>
    <recommendedName>
        <fullName evidence="1">Chromosomal replication initiator protein DnaA</fullName>
    </recommendedName>
</protein>
<evidence type="ECO:0000255" key="1">
    <source>
        <dbReference type="HAMAP-Rule" id="MF_00377"/>
    </source>
</evidence>
<gene>
    <name evidence="1" type="primary">dnaA</name>
    <name type="ordered locus">NWMN_0001</name>
</gene>
<reference key="1">
    <citation type="journal article" date="2008" name="J. Bacteriol.">
        <title>Genome sequence of Staphylococcus aureus strain Newman and comparative analysis of staphylococcal genomes: polymorphism and evolution of two major pathogenicity islands.</title>
        <authorList>
            <person name="Baba T."/>
            <person name="Bae T."/>
            <person name="Schneewind O."/>
            <person name="Takeuchi F."/>
            <person name="Hiramatsu K."/>
        </authorList>
    </citation>
    <scope>NUCLEOTIDE SEQUENCE [LARGE SCALE GENOMIC DNA]</scope>
    <source>
        <strain>Newman</strain>
    </source>
</reference>
<keyword id="KW-0067">ATP-binding</keyword>
<keyword id="KW-0963">Cytoplasm</keyword>
<keyword id="KW-0235">DNA replication</keyword>
<keyword id="KW-0238">DNA-binding</keyword>
<keyword id="KW-0446">Lipid-binding</keyword>
<keyword id="KW-0547">Nucleotide-binding</keyword>
<proteinExistence type="inferred from homology"/>
<dbReference type="EMBL" id="AP009351">
    <property type="protein sequence ID" value="BAF66273.1"/>
    <property type="molecule type" value="Genomic_DNA"/>
</dbReference>
<dbReference type="RefSeq" id="WP_001290433.1">
    <property type="nucleotide sequence ID" value="NZ_JBBIAE010000007.1"/>
</dbReference>
<dbReference type="SMR" id="A6QD41"/>
<dbReference type="KEGG" id="sae:NWMN_0001"/>
<dbReference type="HOGENOM" id="CLU_026910_3_1_9"/>
<dbReference type="Proteomes" id="UP000006386">
    <property type="component" value="Chromosome"/>
</dbReference>
<dbReference type="GO" id="GO:0005737">
    <property type="term" value="C:cytoplasm"/>
    <property type="evidence" value="ECO:0007669"/>
    <property type="project" value="UniProtKB-SubCell"/>
</dbReference>
<dbReference type="GO" id="GO:0005886">
    <property type="term" value="C:plasma membrane"/>
    <property type="evidence" value="ECO:0007669"/>
    <property type="project" value="TreeGrafter"/>
</dbReference>
<dbReference type="GO" id="GO:0005524">
    <property type="term" value="F:ATP binding"/>
    <property type="evidence" value="ECO:0007669"/>
    <property type="project" value="UniProtKB-UniRule"/>
</dbReference>
<dbReference type="GO" id="GO:0016887">
    <property type="term" value="F:ATP hydrolysis activity"/>
    <property type="evidence" value="ECO:0007669"/>
    <property type="project" value="InterPro"/>
</dbReference>
<dbReference type="GO" id="GO:0003688">
    <property type="term" value="F:DNA replication origin binding"/>
    <property type="evidence" value="ECO:0007669"/>
    <property type="project" value="UniProtKB-UniRule"/>
</dbReference>
<dbReference type="GO" id="GO:0008289">
    <property type="term" value="F:lipid binding"/>
    <property type="evidence" value="ECO:0007669"/>
    <property type="project" value="UniProtKB-KW"/>
</dbReference>
<dbReference type="GO" id="GO:0006270">
    <property type="term" value="P:DNA replication initiation"/>
    <property type="evidence" value="ECO:0007669"/>
    <property type="project" value="UniProtKB-UniRule"/>
</dbReference>
<dbReference type="GO" id="GO:0006275">
    <property type="term" value="P:regulation of DNA replication"/>
    <property type="evidence" value="ECO:0007669"/>
    <property type="project" value="UniProtKB-UniRule"/>
</dbReference>
<dbReference type="CDD" id="cd00009">
    <property type="entry name" value="AAA"/>
    <property type="match status" value="1"/>
</dbReference>
<dbReference type="CDD" id="cd06571">
    <property type="entry name" value="Bac_DnaA_C"/>
    <property type="match status" value="1"/>
</dbReference>
<dbReference type="FunFam" id="1.10.1750.10:FF:000003">
    <property type="entry name" value="Chromosomal replication initiator protein DnaA"/>
    <property type="match status" value="1"/>
</dbReference>
<dbReference type="FunFam" id="1.10.8.60:FF:000003">
    <property type="entry name" value="Chromosomal replication initiator protein DnaA"/>
    <property type="match status" value="1"/>
</dbReference>
<dbReference type="FunFam" id="3.40.50.300:FF:000150">
    <property type="entry name" value="Chromosomal replication initiator protein DnaA"/>
    <property type="match status" value="1"/>
</dbReference>
<dbReference type="Gene3D" id="1.10.1750.10">
    <property type="match status" value="1"/>
</dbReference>
<dbReference type="Gene3D" id="1.10.8.60">
    <property type="match status" value="1"/>
</dbReference>
<dbReference type="Gene3D" id="3.30.300.180">
    <property type="match status" value="1"/>
</dbReference>
<dbReference type="Gene3D" id="3.40.50.300">
    <property type="entry name" value="P-loop containing nucleotide triphosphate hydrolases"/>
    <property type="match status" value="1"/>
</dbReference>
<dbReference type="HAMAP" id="MF_00377">
    <property type="entry name" value="DnaA_bact"/>
    <property type="match status" value="1"/>
</dbReference>
<dbReference type="InterPro" id="IPR003593">
    <property type="entry name" value="AAA+_ATPase"/>
</dbReference>
<dbReference type="InterPro" id="IPR001957">
    <property type="entry name" value="Chromosome_initiator_DnaA"/>
</dbReference>
<dbReference type="InterPro" id="IPR020591">
    <property type="entry name" value="Chromosome_initiator_DnaA-like"/>
</dbReference>
<dbReference type="InterPro" id="IPR018312">
    <property type="entry name" value="Chromosome_initiator_DnaA_CS"/>
</dbReference>
<dbReference type="InterPro" id="IPR013159">
    <property type="entry name" value="DnaA_C"/>
</dbReference>
<dbReference type="InterPro" id="IPR013317">
    <property type="entry name" value="DnaA_dom"/>
</dbReference>
<dbReference type="InterPro" id="IPR024633">
    <property type="entry name" value="DnaA_N_dom"/>
</dbReference>
<dbReference type="InterPro" id="IPR038454">
    <property type="entry name" value="DnaA_N_sf"/>
</dbReference>
<dbReference type="InterPro" id="IPR027417">
    <property type="entry name" value="P-loop_NTPase"/>
</dbReference>
<dbReference type="InterPro" id="IPR010921">
    <property type="entry name" value="Trp_repressor/repl_initiator"/>
</dbReference>
<dbReference type="NCBIfam" id="TIGR00362">
    <property type="entry name" value="DnaA"/>
    <property type="match status" value="1"/>
</dbReference>
<dbReference type="PANTHER" id="PTHR30050">
    <property type="entry name" value="CHROMOSOMAL REPLICATION INITIATOR PROTEIN DNAA"/>
    <property type="match status" value="1"/>
</dbReference>
<dbReference type="PANTHER" id="PTHR30050:SF2">
    <property type="entry name" value="CHROMOSOMAL REPLICATION INITIATOR PROTEIN DNAA"/>
    <property type="match status" value="1"/>
</dbReference>
<dbReference type="Pfam" id="PF00308">
    <property type="entry name" value="Bac_DnaA"/>
    <property type="match status" value="1"/>
</dbReference>
<dbReference type="Pfam" id="PF08299">
    <property type="entry name" value="Bac_DnaA_C"/>
    <property type="match status" value="1"/>
</dbReference>
<dbReference type="Pfam" id="PF11638">
    <property type="entry name" value="DnaA_N"/>
    <property type="match status" value="1"/>
</dbReference>
<dbReference type="PRINTS" id="PR00051">
    <property type="entry name" value="DNAA"/>
</dbReference>
<dbReference type="SMART" id="SM00382">
    <property type="entry name" value="AAA"/>
    <property type="match status" value="1"/>
</dbReference>
<dbReference type="SMART" id="SM00760">
    <property type="entry name" value="Bac_DnaA_C"/>
    <property type="match status" value="1"/>
</dbReference>
<dbReference type="SUPFAM" id="SSF52540">
    <property type="entry name" value="P-loop containing nucleoside triphosphate hydrolases"/>
    <property type="match status" value="1"/>
</dbReference>
<dbReference type="SUPFAM" id="SSF48295">
    <property type="entry name" value="TrpR-like"/>
    <property type="match status" value="1"/>
</dbReference>
<dbReference type="PROSITE" id="PS01008">
    <property type="entry name" value="DNAA"/>
    <property type="match status" value="1"/>
</dbReference>
<sequence length="453" mass="51966">MSEKEIWEKVLEIAQEKLSAVSYSTFLKDTELYTIKDGEAIVLSSIPFNANWLNQQYAEIIQAILFDVVGYEVKPHFITTEELANYSNNETATPKETTKPSTETTEDNHVLGREQFNAHNTFDTFVIGPGNRFPHAASLAVAEAPAKAYNPLFIYGGVGLGKTHLMHAIGHHVLDNNPDAKVIYTSSEKFTNEFIKSIRDNEGEAFRERYRNIDVLLIDDIQFIQNKVQTQEEFFYTFNELHQNNKQIVISSDRPPKEIAQLEDRLRSRFEWGLIVDITPPDYETRMAILQKKIEEEKLDIPPEALNYIANQIQSNIRELEGALTRLLAYSQLLGKPITTELTAEALKDIIQAPKSKKITIQDIQKIVGQYYNVRIEDFSAKKRTKSIAYPRQIAMYLSRELTDFSLPKIGEEFGGRDHTTVIHAHEKISKDLKEDPIFKQEVENLEKEIRNV</sequence>
<accession>A6QD41</accession>
<comment type="function">
    <text evidence="1">Plays an essential role in the initiation and regulation of chromosomal replication. ATP-DnaA binds to the origin of replication (oriC) to initiate formation of the DNA replication initiation complex once per cell cycle. Binds the DnaA box (a 9 base pair repeat at the origin) and separates the double-stranded (ds)DNA. Forms a right-handed helical filament on oriC DNA; dsDNA binds to the exterior of the filament while single-stranded (ss)DNA is stabiized in the filament's interior. The ATP-DnaA-oriC complex binds and stabilizes one strand of the AT-rich DNA unwinding element (DUE), permitting loading of DNA polymerase. After initiation quickly degrades to an ADP-DnaA complex that is not apt for DNA replication. Binds acidic phospholipids.</text>
</comment>
<comment type="subunit">
    <text evidence="1">Oligomerizes as a right-handed, spiral filament on DNA at oriC.</text>
</comment>
<comment type="subcellular location">
    <subcellularLocation>
        <location evidence="1">Cytoplasm</location>
    </subcellularLocation>
</comment>
<comment type="domain">
    <text evidence="1">Domain I is involved in oligomerization and binding regulators, domain II is flexibile and of varying length in different bacteria, domain III forms the AAA+ region, while domain IV binds dsDNA.</text>
</comment>
<comment type="similarity">
    <text evidence="1">Belongs to the DnaA family.</text>
</comment>